<organism>
    <name type="scientific">Ralstonia pickettii (strain 12D)</name>
    <dbReference type="NCBI Taxonomy" id="428406"/>
    <lineage>
        <taxon>Bacteria</taxon>
        <taxon>Pseudomonadati</taxon>
        <taxon>Pseudomonadota</taxon>
        <taxon>Betaproteobacteria</taxon>
        <taxon>Burkholderiales</taxon>
        <taxon>Burkholderiaceae</taxon>
        <taxon>Ralstonia</taxon>
    </lineage>
</organism>
<evidence type="ECO:0000255" key="1">
    <source>
        <dbReference type="HAMAP-Rule" id="MF_01871"/>
    </source>
</evidence>
<evidence type="ECO:0000256" key="2">
    <source>
        <dbReference type="SAM" id="MobiDB-lite"/>
    </source>
</evidence>
<protein>
    <recommendedName>
        <fullName evidence="1">Probable inorganic carbon transporter subunit DabA</fullName>
    </recommendedName>
</protein>
<dbReference type="EMBL" id="CP001645">
    <property type="protein sequence ID" value="ACS64749.1"/>
    <property type="molecule type" value="Genomic_DNA"/>
</dbReference>
<dbReference type="STRING" id="428406.Rpic12D_3486"/>
<dbReference type="KEGG" id="rpf:Rpic12D_3486"/>
<dbReference type="PATRIC" id="fig|402626.5.peg.811"/>
<dbReference type="HOGENOM" id="CLU_009885_1_0_4"/>
<dbReference type="GO" id="GO:0005886">
    <property type="term" value="C:plasma membrane"/>
    <property type="evidence" value="ECO:0007669"/>
    <property type="project" value="UniProtKB-SubCell"/>
</dbReference>
<dbReference type="GO" id="GO:0008270">
    <property type="term" value="F:zinc ion binding"/>
    <property type="evidence" value="ECO:0007669"/>
    <property type="project" value="UniProtKB-UniRule"/>
</dbReference>
<dbReference type="HAMAP" id="MF_01871">
    <property type="entry name" value="DabA"/>
    <property type="match status" value="1"/>
</dbReference>
<dbReference type="InterPro" id="IPR018752">
    <property type="entry name" value="DabA"/>
</dbReference>
<dbReference type="PANTHER" id="PTHR38344:SF1">
    <property type="entry name" value="INORGANIC CARBON TRANSPORTER SUBUNIT DABA-RELATED"/>
    <property type="match status" value="1"/>
</dbReference>
<dbReference type="PANTHER" id="PTHR38344">
    <property type="entry name" value="UPF0753 PROTEIN AQ_863"/>
    <property type="match status" value="1"/>
</dbReference>
<dbReference type="Pfam" id="PF10070">
    <property type="entry name" value="DabA"/>
    <property type="match status" value="1"/>
</dbReference>
<feature type="chain" id="PRO_0000387287" description="Probable inorganic carbon transporter subunit DabA">
    <location>
        <begin position="1"/>
        <end position="860"/>
    </location>
</feature>
<feature type="region of interest" description="Disordered" evidence="2">
    <location>
        <begin position="1"/>
        <end position="32"/>
    </location>
</feature>
<feature type="binding site" evidence="1">
    <location>
        <position position="369"/>
    </location>
    <ligand>
        <name>Zn(2+)</name>
        <dbReference type="ChEBI" id="CHEBI:29105"/>
    </ligand>
</feature>
<feature type="binding site" evidence="1">
    <location>
        <position position="371"/>
    </location>
    <ligand>
        <name>Zn(2+)</name>
        <dbReference type="ChEBI" id="CHEBI:29105"/>
    </ligand>
</feature>
<feature type="binding site" evidence="1">
    <location>
        <position position="551"/>
    </location>
    <ligand>
        <name>Zn(2+)</name>
        <dbReference type="ChEBI" id="CHEBI:29105"/>
    </ligand>
</feature>
<feature type="binding site" evidence="1">
    <location>
        <position position="566"/>
    </location>
    <ligand>
        <name>Zn(2+)</name>
        <dbReference type="ChEBI" id="CHEBI:29105"/>
    </ligand>
</feature>
<gene>
    <name evidence="1" type="primary">dabA</name>
    <name type="ordered locus">Rpic12D_3486</name>
</gene>
<sequence>MTTTSLGADAAHTHAMVPSAIPPEGSDAAGPDDTLMQQMQAACAQACRAIAPAWPLDRAIAVNPHWGRVDMPVRRVAARMAVLGGIQVFPTRRSQQQAWVAGRITPADLADALAQLPAARAAGLTEAKCVEALRRHELPPRLPLLIDVLDNDPQRHTRLSWRQAITHQVSQTCAAYFDVHQADWQPERADGLYGFWRDTLQHDHGIGLLMGLPDLGRRLDALPATPLDAEHWALNQLGLPQPVWADYLEAVLLTVNGWASWCAYLGWQAAQEGREDPHLRDLLAIRLAWGAIVQECRDDASTRMAFAALQAEWQQAPSALAEAEAALLVDEVWQLALEAGYQRQLAHRLAGAGALPPVPQDIEVQAAFCIDVRSEPLRRALECVWPAVQTIGFAGFFGLPVAYTPLGTAARRPQLPGLLAPTMEVSDRIDAAQGPDGMPDPAAERAAERARRHRLGASAQVDGASRWPSAAFSYVEVAGVGYLGKLWRWLRPSTEARSRADLTGLPSRYRAVCRPHLHAESVETKAALAARVLRAMGLAEHLAPLVLFVGHGSQTSNNAHAAALDCGACCGQTGEVNARSLALLLNEPPVRAALQAHGITVPEDTVFAAALHNTTTDEIEGFDLDRLPPAARARWDHLQSVLKHASDQVRRERAPSLGLDPRAPHDDLLTQLRRRANDGAQTRPEWGLAGNAAFVIAPRHRTQGVVLDGRSFLHDYDASRDHDGSVLELLMTAPMLVTHWINWQYHASMCDPVHLGSGNKLLHNVVGGSIGVFEGNGGDLRIGLSRQSLHDGQRWIHEPLRLTVLIDAPETAIERVVDKHPIVRQLVDNGWLHLWRFGPQDLQRYAAGQWRPLTSRHATC</sequence>
<comment type="function">
    <text evidence="1">Part of an energy-coupled inorganic carbon pump.</text>
</comment>
<comment type="cofactor">
    <cofactor evidence="1">
        <name>Zn(2+)</name>
        <dbReference type="ChEBI" id="CHEBI:29105"/>
    </cofactor>
</comment>
<comment type="subunit">
    <text evidence="1">Forms a complex with DabB.</text>
</comment>
<comment type="subcellular location">
    <subcellularLocation>
        <location evidence="1">Cell inner membrane</location>
        <topology evidence="1">Peripheral membrane protein</topology>
    </subcellularLocation>
</comment>
<comment type="similarity">
    <text evidence="1">Belongs to the inorganic carbon transporter (TC 9.A.2) DabA family.</text>
</comment>
<keyword id="KW-0997">Cell inner membrane</keyword>
<keyword id="KW-1003">Cell membrane</keyword>
<keyword id="KW-0472">Membrane</keyword>
<keyword id="KW-0479">Metal-binding</keyword>
<keyword id="KW-0813">Transport</keyword>
<keyword id="KW-0862">Zinc</keyword>
<name>DABA_RALP1</name>
<proteinExistence type="inferred from homology"/>
<accession>C6BKZ1</accession>
<reference key="1">
    <citation type="submission" date="2009-06" db="EMBL/GenBank/DDBJ databases">
        <title>Complete sequence chromosome 2 of Ralstonia pickettii 12D.</title>
        <authorList>
            <consortium name="US DOE Joint Genome Institute"/>
            <person name="Lucas S."/>
            <person name="Copeland A."/>
            <person name="Lapidus A."/>
            <person name="Glavina del Rio T."/>
            <person name="Dalin E."/>
            <person name="Tice H."/>
            <person name="Bruce D."/>
            <person name="Goodwin L."/>
            <person name="Pitluck S."/>
            <person name="Sims D."/>
            <person name="Meincke L."/>
            <person name="Brettin T."/>
            <person name="Detter J.C."/>
            <person name="Han C."/>
            <person name="Larimer F."/>
            <person name="Land M."/>
            <person name="Hauser L."/>
            <person name="Kyrpides N."/>
            <person name="Ovchinnikova G."/>
            <person name="Marsh T."/>
            <person name="Richardson P."/>
        </authorList>
    </citation>
    <scope>NUCLEOTIDE SEQUENCE [LARGE SCALE GENOMIC DNA]</scope>
    <source>
        <strain>12D</strain>
    </source>
</reference>